<organism>
    <name type="scientific">Mycoplasma mycoides subsp. mycoides SC (strain CCUG 32753 / NCTC 10114 / PG1)</name>
    <dbReference type="NCBI Taxonomy" id="272632"/>
    <lineage>
        <taxon>Bacteria</taxon>
        <taxon>Bacillati</taxon>
        <taxon>Mycoplasmatota</taxon>
        <taxon>Mollicutes</taxon>
        <taxon>Mycoplasmataceae</taxon>
        <taxon>Mycoplasma</taxon>
    </lineage>
</organism>
<feature type="chain" id="PRO_0000416756" description="Ribonuclease M5">
    <location>
        <begin position="1"/>
        <end position="177"/>
    </location>
</feature>
<feature type="domain" description="Toprim" evidence="1">
    <location>
        <begin position="5"/>
        <end position="99"/>
    </location>
</feature>
<feature type="binding site" evidence="1">
    <location>
        <position position="11"/>
    </location>
    <ligand>
        <name>Mg(2+)</name>
        <dbReference type="ChEBI" id="CHEBI:18420"/>
        <label>1</label>
        <note>catalytic</note>
    </ligand>
</feature>
<feature type="binding site" evidence="1">
    <location>
        <position position="59"/>
    </location>
    <ligand>
        <name>Mg(2+)</name>
        <dbReference type="ChEBI" id="CHEBI:18420"/>
        <label>1</label>
        <note>catalytic</note>
    </ligand>
</feature>
<feature type="binding site" evidence="1">
    <location>
        <position position="59"/>
    </location>
    <ligand>
        <name>Mg(2+)</name>
        <dbReference type="ChEBI" id="CHEBI:18420"/>
        <label>2</label>
    </ligand>
</feature>
<feature type="binding site" evidence="1">
    <location>
        <position position="61"/>
    </location>
    <ligand>
        <name>Mg(2+)</name>
        <dbReference type="ChEBI" id="CHEBI:18420"/>
        <label>2</label>
    </ligand>
</feature>
<proteinExistence type="inferred from homology"/>
<name>RNM5_MYCMS</name>
<keyword id="KW-0963">Cytoplasm</keyword>
<keyword id="KW-0255">Endonuclease</keyword>
<keyword id="KW-0378">Hydrolase</keyword>
<keyword id="KW-0460">Magnesium</keyword>
<keyword id="KW-0479">Metal-binding</keyword>
<keyword id="KW-0540">Nuclease</keyword>
<keyword id="KW-1185">Reference proteome</keyword>
<keyword id="KW-0690">Ribosome biogenesis</keyword>
<keyword id="KW-0694">RNA-binding</keyword>
<keyword id="KW-0698">rRNA processing</keyword>
<keyword id="KW-0699">rRNA-binding</keyword>
<evidence type="ECO:0000255" key="1">
    <source>
        <dbReference type="HAMAP-Rule" id="MF_01469"/>
    </source>
</evidence>
<protein>
    <recommendedName>
        <fullName evidence="1">Ribonuclease M5</fullName>
        <ecNumber evidence="1">3.1.26.8</ecNumber>
    </recommendedName>
    <alternativeName>
        <fullName evidence="1">RNase M5</fullName>
    </alternativeName>
    <alternativeName>
        <fullName evidence="1">Ribosomal RNA terminal maturase M5</fullName>
    </alternativeName>
</protein>
<sequence length="177" mass="20369">MNKIKQIIIVEGKTDTDKLKSIYGNDLKTIQTKGLSLNKKTLEMIEEFNNKMGVIIFTDPDGAGKKIRQTIIDYLDNKVLNAFIKKDDINKTSKKIGIAEASDDAIKKALDNLIIYDKNNVSLSWTDYINNDFYLKSNRIVICKYFNFDNNISSKTLFKWLNWMNVSIDDIKKIIGE</sequence>
<comment type="function">
    <text evidence="1">Required for correct processing of both the 5' and 3' ends of 5S rRNA precursor. Cleaves both sides of a double-stranded region yielding mature 5S rRNA in one step.</text>
</comment>
<comment type="catalytic activity">
    <reaction evidence="1">
        <text>Endonucleolytic cleavage of RNA, removing 21 and 42 nucleotides, respectively, from the 5'- and 3'-termini of a 5S-rRNA precursor.</text>
        <dbReference type="EC" id="3.1.26.8"/>
    </reaction>
</comment>
<comment type="cofactor">
    <cofactor evidence="1">
        <name>Mg(2+)</name>
        <dbReference type="ChEBI" id="CHEBI:18420"/>
    </cofactor>
    <text evidence="1">Binds two Mg(2+) per subunit.</text>
</comment>
<comment type="subcellular location">
    <subcellularLocation>
        <location evidence="1">Cytoplasm</location>
    </subcellularLocation>
</comment>
<comment type="similarity">
    <text evidence="1">Belongs to the ribonuclease M5 family.</text>
</comment>
<reference key="1">
    <citation type="journal article" date="2004" name="Genome Res.">
        <title>The genome sequence of Mycoplasma mycoides subsp. mycoides SC type strain PG1T, the causative agent of contagious bovine pleuropneumonia (CBPP).</title>
        <authorList>
            <person name="Westberg J."/>
            <person name="Persson A."/>
            <person name="Holmberg A."/>
            <person name="Goesmann A."/>
            <person name="Lundeberg J."/>
            <person name="Johansson K.-E."/>
            <person name="Pettersson B."/>
            <person name="Uhlen M."/>
        </authorList>
    </citation>
    <scope>NUCLEOTIDE SEQUENCE [LARGE SCALE GENOMIC DNA]</scope>
    <source>
        <strain>CCUG 32753 / NCTC 10114 / PG1</strain>
    </source>
</reference>
<gene>
    <name evidence="1" type="primary">rnmV</name>
    <name type="ordered locus">MSC_0003</name>
</gene>
<accession>Q6MUM5</accession>
<dbReference type="EC" id="3.1.26.8" evidence="1"/>
<dbReference type="EMBL" id="BX293980">
    <property type="protein sequence ID" value="CAE76656.1"/>
    <property type="molecule type" value="Genomic_DNA"/>
</dbReference>
<dbReference type="RefSeq" id="NP_975014.1">
    <property type="nucleotide sequence ID" value="NC_005364.2"/>
</dbReference>
<dbReference type="RefSeq" id="WP_011166214.1">
    <property type="nucleotide sequence ID" value="NC_005364.2"/>
</dbReference>
<dbReference type="SMR" id="Q6MUM5"/>
<dbReference type="STRING" id="272632.MSC_0003"/>
<dbReference type="KEGG" id="mmy:MSC_0003"/>
<dbReference type="PATRIC" id="fig|272632.4.peg.3"/>
<dbReference type="eggNOG" id="COG1658">
    <property type="taxonomic scope" value="Bacteria"/>
</dbReference>
<dbReference type="HOGENOM" id="CLU_109405_1_0_14"/>
<dbReference type="Proteomes" id="UP000001016">
    <property type="component" value="Chromosome"/>
</dbReference>
<dbReference type="GO" id="GO:0005737">
    <property type="term" value="C:cytoplasm"/>
    <property type="evidence" value="ECO:0007669"/>
    <property type="project" value="UniProtKB-SubCell"/>
</dbReference>
<dbReference type="GO" id="GO:0046872">
    <property type="term" value="F:metal ion binding"/>
    <property type="evidence" value="ECO:0007669"/>
    <property type="project" value="UniProtKB-KW"/>
</dbReference>
<dbReference type="GO" id="GO:0043822">
    <property type="term" value="F:ribonuclease M5 activity"/>
    <property type="evidence" value="ECO:0007669"/>
    <property type="project" value="UniProtKB-UniRule"/>
</dbReference>
<dbReference type="GO" id="GO:0019843">
    <property type="term" value="F:rRNA binding"/>
    <property type="evidence" value="ECO:0007669"/>
    <property type="project" value="UniProtKB-KW"/>
</dbReference>
<dbReference type="GO" id="GO:0006364">
    <property type="term" value="P:rRNA processing"/>
    <property type="evidence" value="ECO:0007669"/>
    <property type="project" value="UniProtKB-UniRule"/>
</dbReference>
<dbReference type="CDD" id="cd01027">
    <property type="entry name" value="TOPRIM_RNase_M5_like"/>
    <property type="match status" value="1"/>
</dbReference>
<dbReference type="Gene3D" id="3.40.1360.10">
    <property type="match status" value="1"/>
</dbReference>
<dbReference type="HAMAP" id="MF_01469">
    <property type="entry name" value="RNase_M5"/>
    <property type="match status" value="1"/>
</dbReference>
<dbReference type="InterPro" id="IPR004466">
    <property type="entry name" value="RNase_M5"/>
</dbReference>
<dbReference type="InterPro" id="IPR025156">
    <property type="entry name" value="RNase_M5_C"/>
</dbReference>
<dbReference type="InterPro" id="IPR006171">
    <property type="entry name" value="TOPRIM_dom"/>
</dbReference>
<dbReference type="InterPro" id="IPR034141">
    <property type="entry name" value="TOPRIM_RNase_M5-like"/>
</dbReference>
<dbReference type="NCBIfam" id="TIGR00334">
    <property type="entry name" value="5S_RNA_mat_M5"/>
    <property type="match status" value="1"/>
</dbReference>
<dbReference type="PANTHER" id="PTHR39156">
    <property type="entry name" value="RIBONUCLEASE M5"/>
    <property type="match status" value="1"/>
</dbReference>
<dbReference type="PANTHER" id="PTHR39156:SF1">
    <property type="entry name" value="RIBONUCLEASE M5"/>
    <property type="match status" value="1"/>
</dbReference>
<dbReference type="Pfam" id="PF13331">
    <property type="entry name" value="DUF4093"/>
    <property type="match status" value="1"/>
</dbReference>
<dbReference type="Pfam" id="PF01751">
    <property type="entry name" value="Toprim"/>
    <property type="match status" value="1"/>
</dbReference>
<dbReference type="SMART" id="SM00493">
    <property type="entry name" value="TOPRIM"/>
    <property type="match status" value="1"/>
</dbReference>
<dbReference type="SUPFAM" id="SSF110455">
    <property type="entry name" value="Toprim domain"/>
    <property type="match status" value="1"/>
</dbReference>
<dbReference type="PROSITE" id="PS50880">
    <property type="entry name" value="TOPRIM"/>
    <property type="match status" value="1"/>
</dbReference>